<keyword id="KW-0131">Cell cycle</keyword>
<keyword id="KW-0132">Cell division</keyword>
<keyword id="KW-0574">Periplasm</keyword>
<keyword id="KW-0732">Signal</keyword>
<sequence length="433" mass="47431">MIKRLRGLLVMLCCVAGMAVAEEKNILVTSGSDRATPIAVVPFGLQGGSVLPEDIADIIGNDLRNSGYYSPIPRQNMISQPSQASEVIFRDWKALGAQYVMVGSIVPSGGRLQVQYALFNVATEQQVLTGSVAGSTDQLRDMAHYIADQSFEKLTGIKGAFSTRMLYVTAERFSTNNTRYTLQRSDYDGARAVTLLQSREPILSPRFAPDGKRIAYVSFEQKRPRIFVQNIDTGRREQVTNFEGLNGAPAWSPDGSRLAFVLSKDGNPDIYVMNVASRQISRVTAGPGINTEPFWGKDGNTLYFTSDRGGKPQIYKQSVSGGGAERVTFVGNYNANPKLSADEKTLVMIHRQQGFTNFKVAAQDLQRGSVKILSETSLDESPTVAPNGTMLIYATRQQGRGVLMLVSLNGRVRLPLPTAQGEVREPSWSPYLN</sequence>
<evidence type="ECO:0000255" key="1">
    <source>
        <dbReference type="HAMAP-Rule" id="MF_00671"/>
    </source>
</evidence>
<protein>
    <recommendedName>
        <fullName evidence="1">Tol-Pal system protein TolB</fullName>
    </recommendedName>
</protein>
<gene>
    <name evidence="1" type="primary">tolB</name>
</gene>
<dbReference type="EMBL" id="X74218">
    <property type="protein sequence ID" value="CAB50781.1"/>
    <property type="molecule type" value="Genomic_DNA"/>
</dbReference>
<dbReference type="SMR" id="P0A174"/>
<dbReference type="eggNOG" id="COG0823">
    <property type="taxonomic scope" value="Bacteria"/>
</dbReference>
<dbReference type="GO" id="GO:0042597">
    <property type="term" value="C:periplasmic space"/>
    <property type="evidence" value="ECO:0007669"/>
    <property type="project" value="UniProtKB-SubCell"/>
</dbReference>
<dbReference type="GO" id="GO:0051301">
    <property type="term" value="P:cell division"/>
    <property type="evidence" value="ECO:0007669"/>
    <property type="project" value="UniProtKB-UniRule"/>
</dbReference>
<dbReference type="GO" id="GO:0017038">
    <property type="term" value="P:protein import"/>
    <property type="evidence" value="ECO:0007669"/>
    <property type="project" value="InterPro"/>
</dbReference>
<dbReference type="Gene3D" id="2.120.10.30">
    <property type="entry name" value="TolB, C-terminal domain"/>
    <property type="match status" value="1"/>
</dbReference>
<dbReference type="Gene3D" id="3.40.50.10070">
    <property type="entry name" value="TolB, N-terminal domain"/>
    <property type="match status" value="1"/>
</dbReference>
<dbReference type="HAMAP" id="MF_00671">
    <property type="entry name" value="TolB"/>
    <property type="match status" value="1"/>
</dbReference>
<dbReference type="InterPro" id="IPR011042">
    <property type="entry name" value="6-blade_b-propeller_TolB-like"/>
</dbReference>
<dbReference type="InterPro" id="IPR011659">
    <property type="entry name" value="PD40"/>
</dbReference>
<dbReference type="InterPro" id="IPR014167">
    <property type="entry name" value="Tol-Pal_TolB"/>
</dbReference>
<dbReference type="InterPro" id="IPR007195">
    <property type="entry name" value="TolB_N"/>
</dbReference>
<dbReference type="NCBIfam" id="TIGR02800">
    <property type="entry name" value="propeller_TolB"/>
    <property type="match status" value="1"/>
</dbReference>
<dbReference type="PANTHER" id="PTHR36842:SF1">
    <property type="entry name" value="PROTEIN TOLB"/>
    <property type="match status" value="1"/>
</dbReference>
<dbReference type="PANTHER" id="PTHR36842">
    <property type="entry name" value="PROTEIN TOLB HOMOLOG"/>
    <property type="match status" value="1"/>
</dbReference>
<dbReference type="Pfam" id="PF07676">
    <property type="entry name" value="PD40"/>
    <property type="match status" value="4"/>
</dbReference>
<dbReference type="Pfam" id="PF04052">
    <property type="entry name" value="TolB_N"/>
    <property type="match status" value="1"/>
</dbReference>
<dbReference type="SUPFAM" id="SSF52964">
    <property type="entry name" value="TolB, N-terminal domain"/>
    <property type="match status" value="1"/>
</dbReference>
<dbReference type="SUPFAM" id="SSF69304">
    <property type="entry name" value="Tricorn protease N-terminal domain"/>
    <property type="match status" value="1"/>
</dbReference>
<accession>P0A174</accession>
<accession>Q88NI5</accession>
<accession>Q9WWX0</accession>
<organism>
    <name type="scientific">Pseudomonas putida</name>
    <name type="common">Arthrobacter siderocapsulatus</name>
    <dbReference type="NCBI Taxonomy" id="303"/>
    <lineage>
        <taxon>Bacteria</taxon>
        <taxon>Pseudomonadati</taxon>
        <taxon>Pseudomonadota</taxon>
        <taxon>Gammaproteobacteria</taxon>
        <taxon>Pseudomonadales</taxon>
        <taxon>Pseudomonadaceae</taxon>
        <taxon>Pseudomonas</taxon>
    </lineage>
</organism>
<feature type="signal peptide" evidence="1">
    <location>
        <begin position="1"/>
        <end position="21"/>
    </location>
</feature>
<feature type="chain" id="PRO_0000034674" description="Tol-Pal system protein TolB" evidence="1">
    <location>
        <begin position="22"/>
        <end position="433"/>
    </location>
</feature>
<proteinExistence type="inferred from homology"/>
<name>TOLB_PSEPU</name>
<reference key="1">
    <citation type="submission" date="1999-07" db="EMBL/GenBank/DDBJ databases">
        <authorList>
            <person name="Rodriguez-Herva J.J."/>
        </authorList>
    </citation>
    <scope>NUCLEOTIDE SEQUENCE [GENOMIC DNA]</scope>
    <source>
        <strain>ATCC 33015 / DSM 3931 / JCM 6156 / NCIMB 12182 / mt-2</strain>
    </source>
</reference>
<comment type="function">
    <text evidence="1">Part of the Tol-Pal system, which plays a role in outer membrane invagination during cell division and is important for maintaining outer membrane integrity.</text>
</comment>
<comment type="subunit">
    <text evidence="1">The Tol-Pal system is composed of five core proteins: the inner membrane proteins TolA, TolQ and TolR, the periplasmic protein TolB and the outer membrane protein Pal. They form a network linking the inner and outer membranes and the peptidoglycan layer.</text>
</comment>
<comment type="subcellular location">
    <subcellularLocation>
        <location evidence="1">Periplasm</location>
    </subcellularLocation>
</comment>
<comment type="similarity">
    <text evidence="1">Belongs to the TolB family.</text>
</comment>